<gene>
    <name evidence="1" type="primary">recO</name>
    <name type="ordered locus">LAF_0841</name>
</gene>
<evidence type="ECO:0000255" key="1">
    <source>
        <dbReference type="HAMAP-Rule" id="MF_00201"/>
    </source>
</evidence>
<proteinExistence type="inferred from homology"/>
<keyword id="KW-0227">DNA damage</keyword>
<keyword id="KW-0233">DNA recombination</keyword>
<keyword id="KW-0234">DNA repair</keyword>
<keyword id="KW-1185">Reference proteome</keyword>
<feature type="chain" id="PRO_1000099386" description="DNA repair protein RecO">
    <location>
        <begin position="1"/>
        <end position="272"/>
    </location>
</feature>
<sequence>MARVNEPFEGVIMYRRDYRERDLLVKILTDRRGPLMFFVRGAKRKGFKLASDILPFTYGSYVGILADEGLSYIVSAQETHHLTGIGADLNRNAYATYLLELVDQAFEEGRALGGWYKQVMAALNLINTGRDPQVVVNVLEVQLLNRFGIAPVWDRCVVCGRSDLPLDYSEKMGGMLCLHHFAEDPYRFHLTPKTVAYLRLFATLNLAKVDQVHVDEATKRQLGRTLDKIYDDQLGLRLKSKRFINEMDSWTNRLLTARKNPGTDDEKKPAGS</sequence>
<accession>B2GBZ5</accession>
<name>RECO_LIMF3</name>
<comment type="function">
    <text evidence="1">Involved in DNA repair and RecF pathway recombination.</text>
</comment>
<comment type="similarity">
    <text evidence="1">Belongs to the RecO family.</text>
</comment>
<reference key="1">
    <citation type="journal article" date="2008" name="DNA Res.">
        <title>Comparative genome analysis of Lactobacillus reuteri and Lactobacillus fermentum reveal a genomic island for reuterin and cobalamin production.</title>
        <authorList>
            <person name="Morita H."/>
            <person name="Toh H."/>
            <person name="Fukuda S."/>
            <person name="Horikawa H."/>
            <person name="Oshima K."/>
            <person name="Suzuki T."/>
            <person name="Murakami M."/>
            <person name="Hisamatsu S."/>
            <person name="Kato Y."/>
            <person name="Takizawa T."/>
            <person name="Fukuoka H."/>
            <person name="Yoshimura T."/>
            <person name="Itoh K."/>
            <person name="O'Sullivan D.J."/>
            <person name="McKay L.L."/>
            <person name="Ohno H."/>
            <person name="Kikuchi J."/>
            <person name="Masaoka T."/>
            <person name="Hattori M."/>
        </authorList>
    </citation>
    <scope>NUCLEOTIDE SEQUENCE [LARGE SCALE GENOMIC DNA]</scope>
    <source>
        <strain>NBRC 3956 / LMG 18251</strain>
    </source>
</reference>
<organism>
    <name type="scientific">Limosilactobacillus fermentum (strain NBRC 3956 / LMG 18251)</name>
    <name type="common">Lactobacillus fermentum</name>
    <dbReference type="NCBI Taxonomy" id="334390"/>
    <lineage>
        <taxon>Bacteria</taxon>
        <taxon>Bacillati</taxon>
        <taxon>Bacillota</taxon>
        <taxon>Bacilli</taxon>
        <taxon>Lactobacillales</taxon>
        <taxon>Lactobacillaceae</taxon>
        <taxon>Limosilactobacillus</taxon>
    </lineage>
</organism>
<dbReference type="EMBL" id="AP008937">
    <property type="protein sequence ID" value="BAG27177.1"/>
    <property type="molecule type" value="Genomic_DNA"/>
</dbReference>
<dbReference type="RefSeq" id="WP_003681720.1">
    <property type="nucleotide sequence ID" value="NC_010610.1"/>
</dbReference>
<dbReference type="SMR" id="B2GBZ5"/>
<dbReference type="KEGG" id="lfe:LAF_0841"/>
<dbReference type="eggNOG" id="COG1381">
    <property type="taxonomic scope" value="Bacteria"/>
</dbReference>
<dbReference type="HOGENOM" id="CLU_066632_4_0_9"/>
<dbReference type="Proteomes" id="UP000001697">
    <property type="component" value="Chromosome"/>
</dbReference>
<dbReference type="GO" id="GO:0043590">
    <property type="term" value="C:bacterial nucleoid"/>
    <property type="evidence" value="ECO:0007669"/>
    <property type="project" value="TreeGrafter"/>
</dbReference>
<dbReference type="GO" id="GO:0006310">
    <property type="term" value="P:DNA recombination"/>
    <property type="evidence" value="ECO:0007669"/>
    <property type="project" value="UniProtKB-UniRule"/>
</dbReference>
<dbReference type="GO" id="GO:0006302">
    <property type="term" value="P:double-strand break repair"/>
    <property type="evidence" value="ECO:0007669"/>
    <property type="project" value="TreeGrafter"/>
</dbReference>
<dbReference type="Gene3D" id="2.40.50.140">
    <property type="entry name" value="Nucleic acid-binding proteins"/>
    <property type="match status" value="1"/>
</dbReference>
<dbReference type="Gene3D" id="1.20.1440.120">
    <property type="entry name" value="Recombination protein O, C-terminal domain"/>
    <property type="match status" value="1"/>
</dbReference>
<dbReference type="HAMAP" id="MF_00201">
    <property type="entry name" value="RecO"/>
    <property type="match status" value="1"/>
</dbReference>
<dbReference type="InterPro" id="IPR037278">
    <property type="entry name" value="ARFGAP/RecO"/>
</dbReference>
<dbReference type="InterPro" id="IPR022572">
    <property type="entry name" value="DNA_rep/recomb_RecO_N"/>
</dbReference>
<dbReference type="InterPro" id="IPR012340">
    <property type="entry name" value="NA-bd_OB-fold"/>
</dbReference>
<dbReference type="InterPro" id="IPR003717">
    <property type="entry name" value="RecO"/>
</dbReference>
<dbReference type="InterPro" id="IPR042242">
    <property type="entry name" value="RecO_C"/>
</dbReference>
<dbReference type="NCBIfam" id="TIGR00613">
    <property type="entry name" value="reco"/>
    <property type="match status" value="1"/>
</dbReference>
<dbReference type="PANTHER" id="PTHR33991">
    <property type="entry name" value="DNA REPAIR PROTEIN RECO"/>
    <property type="match status" value="1"/>
</dbReference>
<dbReference type="PANTHER" id="PTHR33991:SF1">
    <property type="entry name" value="DNA REPAIR PROTEIN RECO"/>
    <property type="match status" value="1"/>
</dbReference>
<dbReference type="Pfam" id="PF02565">
    <property type="entry name" value="RecO_C"/>
    <property type="match status" value="1"/>
</dbReference>
<dbReference type="Pfam" id="PF11967">
    <property type="entry name" value="RecO_N"/>
    <property type="match status" value="1"/>
</dbReference>
<dbReference type="SUPFAM" id="SSF57863">
    <property type="entry name" value="ArfGap/RecO-like zinc finger"/>
    <property type="match status" value="1"/>
</dbReference>
<dbReference type="SUPFAM" id="SSF50249">
    <property type="entry name" value="Nucleic acid-binding proteins"/>
    <property type="match status" value="1"/>
</dbReference>
<protein>
    <recommendedName>
        <fullName evidence="1">DNA repair protein RecO</fullName>
    </recommendedName>
    <alternativeName>
        <fullName evidence="1">Recombination protein O</fullName>
    </alternativeName>
</protein>